<reference key="1">
    <citation type="journal article" date="2007" name="Proc. Natl. Acad. Sci. U.S.A.">
        <title>Genome plasticity of BCG and impact on vaccine efficacy.</title>
        <authorList>
            <person name="Brosch R."/>
            <person name="Gordon S.V."/>
            <person name="Garnier T."/>
            <person name="Eiglmeier K."/>
            <person name="Frigui W."/>
            <person name="Valenti P."/>
            <person name="Dos Santos S."/>
            <person name="Duthoy S."/>
            <person name="Lacroix C."/>
            <person name="Garcia-Pelayo C."/>
            <person name="Inwald J.K."/>
            <person name="Golby P."/>
            <person name="Garcia J.N."/>
            <person name="Hewinson R.G."/>
            <person name="Behr M.A."/>
            <person name="Quail M.A."/>
            <person name="Churcher C."/>
            <person name="Barrell B.G."/>
            <person name="Parkhill J."/>
            <person name="Cole S.T."/>
        </authorList>
    </citation>
    <scope>NUCLEOTIDE SEQUENCE [LARGE SCALE GENOMIC DNA]</scope>
    <source>
        <strain>BCG / Pasteur 1173P2</strain>
    </source>
</reference>
<name>GLMU_MYCBP</name>
<gene>
    <name evidence="1" type="primary">glmU</name>
    <name type="ordered locus">BCG_1075c</name>
</gene>
<comment type="function">
    <text evidence="1">Catalyzes the last two sequential reactions in the de novo biosynthetic pathway for UDP-N-acetylglucosamine (UDP-GlcNAc). The C-terminal domain catalyzes the transfer of acetyl group from acetyl coenzyme A to glucosamine-1-phosphate (GlcN-1-P) to produce N-acetylglucosamine-1-phosphate (GlcNAc-1-P), which is converted into UDP-GlcNAc by the transfer of uridine 5-monophosphate (from uridine 5-triphosphate), a reaction catalyzed by the N-terminal domain.</text>
</comment>
<comment type="catalytic activity">
    <reaction evidence="1">
        <text>alpha-D-glucosamine 1-phosphate + acetyl-CoA = N-acetyl-alpha-D-glucosamine 1-phosphate + CoA + H(+)</text>
        <dbReference type="Rhea" id="RHEA:13725"/>
        <dbReference type="ChEBI" id="CHEBI:15378"/>
        <dbReference type="ChEBI" id="CHEBI:57287"/>
        <dbReference type="ChEBI" id="CHEBI:57288"/>
        <dbReference type="ChEBI" id="CHEBI:57776"/>
        <dbReference type="ChEBI" id="CHEBI:58516"/>
        <dbReference type="EC" id="2.3.1.157"/>
    </reaction>
</comment>
<comment type="catalytic activity">
    <reaction evidence="1">
        <text>N-acetyl-alpha-D-glucosamine 1-phosphate + UTP + H(+) = UDP-N-acetyl-alpha-D-glucosamine + diphosphate</text>
        <dbReference type="Rhea" id="RHEA:13509"/>
        <dbReference type="ChEBI" id="CHEBI:15378"/>
        <dbReference type="ChEBI" id="CHEBI:33019"/>
        <dbReference type="ChEBI" id="CHEBI:46398"/>
        <dbReference type="ChEBI" id="CHEBI:57705"/>
        <dbReference type="ChEBI" id="CHEBI:57776"/>
        <dbReference type="EC" id="2.7.7.23"/>
    </reaction>
</comment>
<comment type="cofactor">
    <cofactor evidence="1">
        <name>Mg(2+)</name>
        <dbReference type="ChEBI" id="CHEBI:18420"/>
    </cofactor>
    <text evidence="1">Binds 1 Mg(2+) ion per subunit.</text>
</comment>
<comment type="pathway">
    <text evidence="1">Nucleotide-sugar biosynthesis; UDP-N-acetyl-alpha-D-glucosamine biosynthesis; N-acetyl-alpha-D-glucosamine 1-phosphate from alpha-D-glucosamine 6-phosphate (route II): step 2/2.</text>
</comment>
<comment type="pathway">
    <text evidence="1">Nucleotide-sugar biosynthesis; UDP-N-acetyl-alpha-D-glucosamine biosynthesis; UDP-N-acetyl-alpha-D-glucosamine from N-acetyl-alpha-D-glucosamine 1-phosphate: step 1/1.</text>
</comment>
<comment type="pathway">
    <text evidence="1">Bacterial outer membrane biogenesis; LPS lipid A biosynthesis.</text>
</comment>
<comment type="subunit">
    <text evidence="1">Homotrimer.</text>
</comment>
<comment type="subcellular location">
    <subcellularLocation>
        <location evidence="1">Cytoplasm</location>
    </subcellularLocation>
</comment>
<comment type="similarity">
    <text evidence="1">In the N-terminal section; belongs to the N-acetylglucosamine-1-phosphate uridyltransferase family.</text>
</comment>
<comment type="similarity">
    <text evidence="1">In the C-terminal section; belongs to the transferase hexapeptide repeat family.</text>
</comment>
<feature type="chain" id="PRO_0000337730" description="Bifunctional protein GlmU">
    <location>
        <begin position="1"/>
        <end position="495"/>
    </location>
</feature>
<feature type="region of interest" description="Pyrophosphorylase" evidence="1">
    <location>
        <begin position="1"/>
        <end position="241"/>
    </location>
</feature>
<feature type="region of interest" description="Linker" evidence="1">
    <location>
        <begin position="242"/>
        <end position="262"/>
    </location>
</feature>
<feature type="region of interest" description="N-acetyltransferase" evidence="1">
    <location>
        <begin position="263"/>
        <end position="495"/>
    </location>
</feature>
<feature type="region of interest" description="Disordered" evidence="2">
    <location>
        <begin position="457"/>
        <end position="495"/>
    </location>
</feature>
<feature type="compositionally biased region" description="Low complexity" evidence="2">
    <location>
        <begin position="483"/>
        <end position="495"/>
    </location>
</feature>
<feature type="active site" description="Proton acceptor" evidence="1">
    <location>
        <position position="374"/>
    </location>
</feature>
<feature type="binding site" evidence="1">
    <location>
        <begin position="12"/>
        <end position="15"/>
    </location>
    <ligand>
        <name>UDP-N-acetyl-alpha-D-glucosamine</name>
        <dbReference type="ChEBI" id="CHEBI:57705"/>
    </ligand>
</feature>
<feature type="binding site" evidence="1">
    <location>
        <position position="26"/>
    </location>
    <ligand>
        <name>UDP-N-acetyl-alpha-D-glucosamine</name>
        <dbReference type="ChEBI" id="CHEBI:57705"/>
    </ligand>
</feature>
<feature type="binding site" evidence="1">
    <location>
        <position position="83"/>
    </location>
    <ligand>
        <name>UDP-N-acetyl-alpha-D-glucosamine</name>
        <dbReference type="ChEBI" id="CHEBI:57705"/>
    </ligand>
</feature>
<feature type="binding site" evidence="1">
    <location>
        <begin position="88"/>
        <end position="89"/>
    </location>
    <ligand>
        <name>UDP-N-acetyl-alpha-D-glucosamine</name>
        <dbReference type="ChEBI" id="CHEBI:57705"/>
    </ligand>
</feature>
<feature type="binding site" evidence="1">
    <location>
        <begin position="112"/>
        <end position="114"/>
    </location>
    <ligand>
        <name>UDP-N-acetyl-alpha-D-glucosamine</name>
        <dbReference type="ChEBI" id="CHEBI:57705"/>
    </ligand>
</feature>
<feature type="binding site" evidence="1">
    <location>
        <position position="114"/>
    </location>
    <ligand>
        <name>Mg(2+)</name>
        <dbReference type="ChEBI" id="CHEBI:18420"/>
    </ligand>
</feature>
<feature type="binding site" evidence="1">
    <location>
        <position position="151"/>
    </location>
    <ligand>
        <name>UDP-N-acetyl-alpha-D-glucosamine</name>
        <dbReference type="ChEBI" id="CHEBI:57705"/>
    </ligand>
</feature>
<feature type="binding site" evidence="1">
    <location>
        <position position="166"/>
    </location>
    <ligand>
        <name>UDP-N-acetyl-alpha-D-glucosamine</name>
        <dbReference type="ChEBI" id="CHEBI:57705"/>
    </ligand>
</feature>
<feature type="binding site" evidence="1">
    <location>
        <position position="181"/>
    </location>
    <ligand>
        <name>UDP-N-acetyl-alpha-D-glucosamine</name>
        <dbReference type="ChEBI" id="CHEBI:57705"/>
    </ligand>
</feature>
<feature type="binding site" evidence="1">
    <location>
        <position position="239"/>
    </location>
    <ligand>
        <name>Mg(2+)</name>
        <dbReference type="ChEBI" id="CHEBI:18420"/>
    </ligand>
</feature>
<feature type="binding site" evidence="1">
    <location>
        <position position="239"/>
    </location>
    <ligand>
        <name>UDP-N-acetyl-alpha-D-glucosamine</name>
        <dbReference type="ChEBI" id="CHEBI:57705"/>
    </ligand>
</feature>
<feature type="binding site" evidence="1">
    <location>
        <position position="344"/>
    </location>
    <ligand>
        <name>UDP-N-acetyl-alpha-D-glucosamine</name>
        <dbReference type="ChEBI" id="CHEBI:57705"/>
    </ligand>
</feature>
<feature type="binding site" evidence="1">
    <location>
        <position position="362"/>
    </location>
    <ligand>
        <name>UDP-N-acetyl-alpha-D-glucosamine</name>
        <dbReference type="ChEBI" id="CHEBI:57705"/>
    </ligand>
</feature>
<feature type="binding site" evidence="1">
    <location>
        <position position="377"/>
    </location>
    <ligand>
        <name>UDP-N-acetyl-alpha-D-glucosamine</name>
        <dbReference type="ChEBI" id="CHEBI:57705"/>
    </ligand>
</feature>
<feature type="binding site" evidence="1">
    <location>
        <position position="388"/>
    </location>
    <ligand>
        <name>UDP-N-acetyl-alpha-D-glucosamine</name>
        <dbReference type="ChEBI" id="CHEBI:57705"/>
    </ligand>
</feature>
<feature type="binding site" evidence="1">
    <location>
        <position position="391"/>
    </location>
    <ligand>
        <name>acetyl-CoA</name>
        <dbReference type="ChEBI" id="CHEBI:57288"/>
    </ligand>
</feature>
<feature type="binding site" evidence="1">
    <location>
        <begin position="397"/>
        <end position="398"/>
    </location>
    <ligand>
        <name>acetyl-CoA</name>
        <dbReference type="ChEBI" id="CHEBI:57288"/>
    </ligand>
</feature>
<feature type="binding site" evidence="1">
    <location>
        <position position="416"/>
    </location>
    <ligand>
        <name>acetyl-CoA</name>
        <dbReference type="ChEBI" id="CHEBI:57288"/>
    </ligand>
</feature>
<feature type="binding site" evidence="1">
    <location>
        <position position="434"/>
    </location>
    <ligand>
        <name>acetyl-CoA</name>
        <dbReference type="ChEBI" id="CHEBI:57288"/>
    </ligand>
</feature>
<dbReference type="EC" id="2.7.7.23" evidence="1"/>
<dbReference type="EC" id="2.3.1.157" evidence="1"/>
<dbReference type="EMBL" id="AM408590">
    <property type="protein sequence ID" value="CAL71062.1"/>
    <property type="molecule type" value="Genomic_DNA"/>
</dbReference>
<dbReference type="RefSeq" id="WP_003405267.1">
    <property type="nucleotide sequence ID" value="NC_008769.1"/>
</dbReference>
<dbReference type="SMR" id="A1KHF6"/>
<dbReference type="KEGG" id="mbb:BCG_1075c"/>
<dbReference type="HOGENOM" id="CLU_029499_15_2_11"/>
<dbReference type="UniPathway" id="UPA00113">
    <property type="reaction ID" value="UER00532"/>
</dbReference>
<dbReference type="UniPathway" id="UPA00113">
    <property type="reaction ID" value="UER00533"/>
</dbReference>
<dbReference type="UniPathway" id="UPA00973"/>
<dbReference type="Proteomes" id="UP000001472">
    <property type="component" value="Chromosome"/>
</dbReference>
<dbReference type="GO" id="GO:0005737">
    <property type="term" value="C:cytoplasm"/>
    <property type="evidence" value="ECO:0007669"/>
    <property type="project" value="UniProtKB-SubCell"/>
</dbReference>
<dbReference type="GO" id="GO:0016020">
    <property type="term" value="C:membrane"/>
    <property type="evidence" value="ECO:0007669"/>
    <property type="project" value="GOC"/>
</dbReference>
<dbReference type="GO" id="GO:0019134">
    <property type="term" value="F:glucosamine-1-phosphate N-acetyltransferase activity"/>
    <property type="evidence" value="ECO:0007669"/>
    <property type="project" value="UniProtKB-UniRule"/>
</dbReference>
<dbReference type="GO" id="GO:0000287">
    <property type="term" value="F:magnesium ion binding"/>
    <property type="evidence" value="ECO:0007669"/>
    <property type="project" value="UniProtKB-UniRule"/>
</dbReference>
<dbReference type="GO" id="GO:0003977">
    <property type="term" value="F:UDP-N-acetylglucosamine diphosphorylase activity"/>
    <property type="evidence" value="ECO:0007669"/>
    <property type="project" value="UniProtKB-UniRule"/>
</dbReference>
<dbReference type="GO" id="GO:0000902">
    <property type="term" value="P:cell morphogenesis"/>
    <property type="evidence" value="ECO:0007669"/>
    <property type="project" value="UniProtKB-UniRule"/>
</dbReference>
<dbReference type="GO" id="GO:0071555">
    <property type="term" value="P:cell wall organization"/>
    <property type="evidence" value="ECO:0007669"/>
    <property type="project" value="UniProtKB-KW"/>
</dbReference>
<dbReference type="GO" id="GO:0009245">
    <property type="term" value="P:lipid A biosynthetic process"/>
    <property type="evidence" value="ECO:0007669"/>
    <property type="project" value="UniProtKB-UniRule"/>
</dbReference>
<dbReference type="GO" id="GO:0009252">
    <property type="term" value="P:peptidoglycan biosynthetic process"/>
    <property type="evidence" value="ECO:0007669"/>
    <property type="project" value="UniProtKB-UniRule"/>
</dbReference>
<dbReference type="GO" id="GO:0008360">
    <property type="term" value="P:regulation of cell shape"/>
    <property type="evidence" value="ECO:0007669"/>
    <property type="project" value="UniProtKB-KW"/>
</dbReference>
<dbReference type="GO" id="GO:0006048">
    <property type="term" value="P:UDP-N-acetylglucosamine biosynthetic process"/>
    <property type="evidence" value="ECO:0007669"/>
    <property type="project" value="UniProtKB-UniPathway"/>
</dbReference>
<dbReference type="CDD" id="cd02540">
    <property type="entry name" value="GT2_GlmU_N_bac"/>
    <property type="match status" value="1"/>
</dbReference>
<dbReference type="CDD" id="cd03353">
    <property type="entry name" value="LbH_GlmU_C"/>
    <property type="match status" value="1"/>
</dbReference>
<dbReference type="FunFam" id="2.160.10.10:FF:000028">
    <property type="entry name" value="Bifunctional protein GlmU"/>
    <property type="match status" value="1"/>
</dbReference>
<dbReference type="FunFam" id="3.90.550.10:FF:000006">
    <property type="entry name" value="Bifunctional protein GlmU"/>
    <property type="match status" value="1"/>
</dbReference>
<dbReference type="Gene3D" id="2.160.10.10">
    <property type="entry name" value="Hexapeptide repeat proteins"/>
    <property type="match status" value="1"/>
</dbReference>
<dbReference type="Gene3D" id="3.90.550.10">
    <property type="entry name" value="Spore Coat Polysaccharide Biosynthesis Protein SpsA, Chain A"/>
    <property type="match status" value="1"/>
</dbReference>
<dbReference type="HAMAP" id="MF_01631">
    <property type="entry name" value="GlmU"/>
    <property type="match status" value="1"/>
</dbReference>
<dbReference type="InterPro" id="IPR005882">
    <property type="entry name" value="Bifunctional_GlmU"/>
</dbReference>
<dbReference type="InterPro" id="IPR050065">
    <property type="entry name" value="GlmU-like"/>
</dbReference>
<dbReference type="InterPro" id="IPR038009">
    <property type="entry name" value="GlmU_C_LbH"/>
</dbReference>
<dbReference type="InterPro" id="IPR001451">
    <property type="entry name" value="Hexapep"/>
</dbReference>
<dbReference type="InterPro" id="IPR025877">
    <property type="entry name" value="MobA-like_NTP_Trfase"/>
</dbReference>
<dbReference type="InterPro" id="IPR029044">
    <property type="entry name" value="Nucleotide-diphossugar_trans"/>
</dbReference>
<dbReference type="InterPro" id="IPR011004">
    <property type="entry name" value="Trimer_LpxA-like_sf"/>
</dbReference>
<dbReference type="NCBIfam" id="TIGR01173">
    <property type="entry name" value="glmU"/>
    <property type="match status" value="1"/>
</dbReference>
<dbReference type="NCBIfam" id="NF010932">
    <property type="entry name" value="PRK14352.1"/>
    <property type="match status" value="1"/>
</dbReference>
<dbReference type="PANTHER" id="PTHR43584:SF3">
    <property type="entry name" value="BIFUNCTIONAL PROTEIN GLMU"/>
    <property type="match status" value="1"/>
</dbReference>
<dbReference type="PANTHER" id="PTHR43584">
    <property type="entry name" value="NUCLEOTIDYL TRANSFERASE"/>
    <property type="match status" value="1"/>
</dbReference>
<dbReference type="Pfam" id="PF00132">
    <property type="entry name" value="Hexapep"/>
    <property type="match status" value="1"/>
</dbReference>
<dbReference type="Pfam" id="PF12804">
    <property type="entry name" value="NTP_transf_3"/>
    <property type="match status" value="1"/>
</dbReference>
<dbReference type="SUPFAM" id="SSF53448">
    <property type="entry name" value="Nucleotide-diphospho-sugar transferases"/>
    <property type="match status" value="1"/>
</dbReference>
<dbReference type="SUPFAM" id="SSF51161">
    <property type="entry name" value="Trimeric LpxA-like enzymes"/>
    <property type="match status" value="1"/>
</dbReference>
<proteinExistence type="inferred from homology"/>
<accession>A1KHF6</accession>
<sequence length="495" mass="51584">MTFPGDTAVLVLAAGPGTRMRSDTPKVLHTLAGRSMLSHVLHAIAKLAPQRLIVVLGHDHQRIAPLVGELADTLGRTIDVALQDRPLGTGHAVLCGLSALPDDYAGNVVVTSGDTPLLDADTLADLIATHRAVSAAVTVLTTTLDDPFGYGRILRTQDHEVMAIVEQTDATPSQREIREVNAGVYAFDIAALRSALSRLSSNNAQQELYLTDVIAILRSDGQTVHASHVDDSALVAGVNNRVQLAELASELNRRVVAAHQLAGVTVVDPATTWIDVDVTIGRDTVIHPGTQLLGRTQIGGRCVVGPDTTLTDVAVGDGASVVRTHGSSSSIGDGAAVGPFTYLRPGTALGADGKLGAFVEVKNSTIGTGTKVPHLTYVGDADIGEYSNIGASSVFVNYDGTSKRRTTVGSHVRTGSDTMFVAPVTIGDGAYTGAGTVVREDVPPGALAVSAGPQRNIENWVQRKRPGSPAAQASKRASEMACQQPTQPPDADQTP</sequence>
<keyword id="KW-0012">Acyltransferase</keyword>
<keyword id="KW-0133">Cell shape</keyword>
<keyword id="KW-0961">Cell wall biogenesis/degradation</keyword>
<keyword id="KW-0963">Cytoplasm</keyword>
<keyword id="KW-0460">Magnesium</keyword>
<keyword id="KW-0479">Metal-binding</keyword>
<keyword id="KW-0511">Multifunctional enzyme</keyword>
<keyword id="KW-0548">Nucleotidyltransferase</keyword>
<keyword id="KW-0573">Peptidoglycan synthesis</keyword>
<keyword id="KW-0677">Repeat</keyword>
<keyword id="KW-0808">Transferase</keyword>
<evidence type="ECO:0000255" key="1">
    <source>
        <dbReference type="HAMAP-Rule" id="MF_01631"/>
    </source>
</evidence>
<evidence type="ECO:0000256" key="2">
    <source>
        <dbReference type="SAM" id="MobiDB-lite"/>
    </source>
</evidence>
<organism>
    <name type="scientific">Mycobacterium bovis (strain BCG / Pasteur 1173P2)</name>
    <dbReference type="NCBI Taxonomy" id="410289"/>
    <lineage>
        <taxon>Bacteria</taxon>
        <taxon>Bacillati</taxon>
        <taxon>Actinomycetota</taxon>
        <taxon>Actinomycetes</taxon>
        <taxon>Mycobacteriales</taxon>
        <taxon>Mycobacteriaceae</taxon>
        <taxon>Mycobacterium</taxon>
        <taxon>Mycobacterium tuberculosis complex</taxon>
    </lineage>
</organism>
<protein>
    <recommendedName>
        <fullName evidence="1">Bifunctional protein GlmU</fullName>
    </recommendedName>
    <domain>
        <recommendedName>
            <fullName evidence="1">UDP-N-acetylglucosamine pyrophosphorylase</fullName>
            <ecNumber evidence="1">2.7.7.23</ecNumber>
        </recommendedName>
        <alternativeName>
            <fullName evidence="1">N-acetylglucosamine-1-phosphate uridyltransferase</fullName>
        </alternativeName>
    </domain>
    <domain>
        <recommendedName>
            <fullName evidence="1">Glucosamine-1-phosphate N-acetyltransferase</fullName>
            <ecNumber evidence="1">2.3.1.157</ecNumber>
        </recommendedName>
    </domain>
</protein>